<organism>
    <name type="scientific">Taeniopygia guttata</name>
    <name type="common">Zebra finch</name>
    <name type="synonym">Poephila guttata</name>
    <dbReference type="NCBI Taxonomy" id="59729"/>
    <lineage>
        <taxon>Eukaryota</taxon>
        <taxon>Metazoa</taxon>
        <taxon>Chordata</taxon>
        <taxon>Craniata</taxon>
        <taxon>Vertebrata</taxon>
        <taxon>Euteleostomi</taxon>
        <taxon>Archelosauria</taxon>
        <taxon>Archosauria</taxon>
        <taxon>Dinosauria</taxon>
        <taxon>Saurischia</taxon>
        <taxon>Theropoda</taxon>
        <taxon>Coelurosauria</taxon>
        <taxon>Aves</taxon>
        <taxon>Neognathae</taxon>
        <taxon>Neoaves</taxon>
        <taxon>Telluraves</taxon>
        <taxon>Australaves</taxon>
        <taxon>Passeriformes</taxon>
        <taxon>Passeroidea</taxon>
        <taxon>Estrildidae</taxon>
        <taxon>Estrildinae</taxon>
        <taxon>Taeniopygia</taxon>
    </lineage>
</organism>
<protein>
    <recommendedName>
        <fullName>Trafficking protein particle complex subunit 2-like protein</fullName>
    </recommendedName>
    <alternativeName>
        <fullName>Putative hematopoietic stem/progenitor cells 176</fullName>
    </alternativeName>
</protein>
<evidence type="ECO:0000250" key="1"/>
<evidence type="ECO:0000305" key="2"/>
<proteinExistence type="evidence at transcript level"/>
<accession>B5FXJ6</accession>
<sequence>MAVCIAVIAKENYPLYIRSVPTENELKFHYTVHTSLDVVDEKISAMGKALVDQRELYLGLLYPTEDYKVYGYVTNSKVKFVMVVDSSNTALRDNEIRSMFRKLHNSYTDIMCNPFYNPGDRIHSRAFDTMVNSMMMQVC</sequence>
<name>TPC2L_TAEGU</name>
<reference key="1">
    <citation type="journal article" date="2006" name="Proc. Natl. Acad. Sci. U.S.A.">
        <title>A molecular neuroethological approach for identifying and characterizing a cascade of behaviorally regulated genes.</title>
        <authorList>
            <person name="Wada K."/>
            <person name="Howard J.T."/>
            <person name="McConnell P."/>
            <person name="Whitney O."/>
            <person name="Lints T."/>
            <person name="Rivas M.V."/>
            <person name="Horita H."/>
            <person name="Patterson M.A."/>
            <person name="White S.A."/>
            <person name="Scharff C."/>
            <person name="Haesler S."/>
            <person name="Zhao S."/>
            <person name="Sakaguchi H."/>
            <person name="Hagiwara M."/>
            <person name="Shiraki T."/>
            <person name="Hirozane-Kishikawa T."/>
            <person name="Skene P."/>
            <person name="Hayashizaki Y."/>
            <person name="Carninci P."/>
            <person name="Jarvis E.D."/>
        </authorList>
    </citation>
    <scope>NUCLEOTIDE SEQUENCE [LARGE SCALE MRNA]</scope>
    <source>
        <tissue>Brain</tissue>
    </source>
</reference>
<dbReference type="EMBL" id="DQ213452">
    <property type="protein sequence ID" value="ACH43757.1"/>
    <property type="molecule type" value="mRNA"/>
</dbReference>
<dbReference type="EMBL" id="DQ213453">
    <property type="protein sequence ID" value="ACH43758.1"/>
    <property type="molecule type" value="mRNA"/>
</dbReference>
<dbReference type="EMBL" id="DQ213454">
    <property type="protein sequence ID" value="ACH43759.1"/>
    <property type="molecule type" value="mRNA"/>
</dbReference>
<dbReference type="RefSeq" id="NP_001232306.1">
    <property type="nucleotide sequence ID" value="NM_001245377.2"/>
</dbReference>
<dbReference type="SMR" id="B5FXJ6"/>
<dbReference type="STRING" id="59729.ENSTGUP00000035904"/>
<dbReference type="Ensembl" id="ENSTGUT00000029229.1">
    <property type="protein sequence ID" value="ENSTGUP00000032541.1"/>
    <property type="gene ID" value="ENSTGUG00000022026.1"/>
</dbReference>
<dbReference type="GeneID" id="100190039"/>
<dbReference type="KEGG" id="tgu:100190039"/>
<dbReference type="CTD" id="51693"/>
<dbReference type="GeneTree" id="ENSGT00510000047505"/>
<dbReference type="InParanoid" id="B5FXJ6"/>
<dbReference type="OrthoDB" id="10258445at2759"/>
<dbReference type="Proteomes" id="UP000007754">
    <property type="component" value="Chromosome 11"/>
</dbReference>
<dbReference type="GO" id="GO:0005783">
    <property type="term" value="C:endoplasmic reticulum"/>
    <property type="evidence" value="ECO:0007669"/>
    <property type="project" value="UniProtKB-SubCell"/>
</dbReference>
<dbReference type="GO" id="GO:0005794">
    <property type="term" value="C:Golgi apparatus"/>
    <property type="evidence" value="ECO:0007669"/>
    <property type="project" value="UniProtKB-SubCell"/>
</dbReference>
<dbReference type="GO" id="GO:0048471">
    <property type="term" value="C:perinuclear region of cytoplasm"/>
    <property type="evidence" value="ECO:0007669"/>
    <property type="project" value="UniProtKB-SubCell"/>
</dbReference>
<dbReference type="GO" id="GO:0006888">
    <property type="term" value="P:endoplasmic reticulum to Golgi vesicle-mediated transport"/>
    <property type="evidence" value="ECO:0007669"/>
    <property type="project" value="InterPro"/>
</dbReference>
<dbReference type="CDD" id="cd14854">
    <property type="entry name" value="TRAPPC2L"/>
    <property type="match status" value="1"/>
</dbReference>
<dbReference type="FunFam" id="3.30.450.70:FF:000005">
    <property type="entry name" value="Trafficking protein particle complex subunit 2-like protein"/>
    <property type="match status" value="1"/>
</dbReference>
<dbReference type="Gene3D" id="3.30.450.70">
    <property type="match status" value="1"/>
</dbReference>
<dbReference type="InterPro" id="IPR011012">
    <property type="entry name" value="Longin-like_dom_sf"/>
</dbReference>
<dbReference type="InterPro" id="IPR006722">
    <property type="entry name" value="Sedlin"/>
</dbReference>
<dbReference type="InterPro" id="IPR044760">
    <property type="entry name" value="TRAPPC2L"/>
</dbReference>
<dbReference type="PANTHER" id="PTHR12403">
    <property type="entry name" value="TRAFFICKING PROTEIN PARTICLE COMPLEX SUBUNIT 2"/>
    <property type="match status" value="1"/>
</dbReference>
<dbReference type="Pfam" id="PF04628">
    <property type="entry name" value="Sedlin_N"/>
    <property type="match status" value="1"/>
</dbReference>
<dbReference type="SUPFAM" id="SSF64356">
    <property type="entry name" value="SNARE-like"/>
    <property type="match status" value="1"/>
</dbReference>
<comment type="function">
    <text evidence="1">May play a role in vesicular transport from endoplasmic reticulum to Golgi.</text>
</comment>
<comment type="subcellular location">
    <subcellularLocation>
        <location evidence="1">Cytoplasm</location>
        <location evidence="1">Perinuclear region</location>
    </subcellularLocation>
    <subcellularLocation>
        <location evidence="1">Endoplasmic reticulum</location>
    </subcellularLocation>
    <subcellularLocation>
        <location evidence="1">Golgi apparatus</location>
    </subcellularLocation>
</comment>
<comment type="similarity">
    <text evidence="2">Belongs to the TRAPP small subunits family. Sedlin subfamily.</text>
</comment>
<keyword id="KW-0963">Cytoplasm</keyword>
<keyword id="KW-0256">Endoplasmic reticulum</keyword>
<keyword id="KW-0931">ER-Golgi transport</keyword>
<keyword id="KW-0333">Golgi apparatus</keyword>
<keyword id="KW-1185">Reference proteome</keyword>
<keyword id="KW-0813">Transport</keyword>
<gene>
    <name type="primary">TRAPPC2L</name>
</gene>
<feature type="chain" id="PRO_0000379775" description="Trafficking protein particle complex subunit 2-like protein">
    <location>
        <begin position="1"/>
        <end position="139"/>
    </location>
</feature>